<evidence type="ECO:0000255" key="1">
    <source>
        <dbReference type="HAMAP-Rule" id="MF_01302"/>
    </source>
</evidence>
<evidence type="ECO:0000305" key="2"/>
<feature type="chain" id="PRO_0000290939" description="Small ribosomal subunit protein uS8">
    <location>
        <begin position="1"/>
        <end position="132"/>
    </location>
</feature>
<name>RS8_STAA3</name>
<reference key="1">
    <citation type="journal article" date="2006" name="Lancet">
        <title>Complete genome sequence of USA300, an epidemic clone of community-acquired meticillin-resistant Staphylococcus aureus.</title>
        <authorList>
            <person name="Diep B.A."/>
            <person name="Gill S.R."/>
            <person name="Chang R.F."/>
            <person name="Phan T.H."/>
            <person name="Chen J.H."/>
            <person name="Davidson M.G."/>
            <person name="Lin F."/>
            <person name="Lin J."/>
            <person name="Carleton H.A."/>
            <person name="Mongodin E.F."/>
            <person name="Sensabaugh G.F."/>
            <person name="Perdreau-Remington F."/>
        </authorList>
    </citation>
    <scope>NUCLEOTIDE SEQUENCE [LARGE SCALE GENOMIC DNA]</scope>
    <source>
        <strain>USA300</strain>
    </source>
</reference>
<comment type="function">
    <text evidence="1">One of the primary rRNA binding proteins, it binds directly to 16S rRNA central domain where it helps coordinate assembly of the platform of the 30S subunit.</text>
</comment>
<comment type="subunit">
    <text evidence="1">Part of the 30S ribosomal subunit. Contacts proteins S5 and S12.</text>
</comment>
<comment type="similarity">
    <text evidence="1">Belongs to the universal ribosomal protein uS8 family.</text>
</comment>
<protein>
    <recommendedName>
        <fullName evidence="1">Small ribosomal subunit protein uS8</fullName>
    </recommendedName>
    <alternativeName>
        <fullName evidence="2">30S ribosomal protein S8</fullName>
    </alternativeName>
</protein>
<gene>
    <name evidence="1" type="primary">rpsH</name>
    <name type="ordered locus">SAUSA300_2190</name>
</gene>
<keyword id="KW-0687">Ribonucleoprotein</keyword>
<keyword id="KW-0689">Ribosomal protein</keyword>
<keyword id="KW-0694">RNA-binding</keyword>
<keyword id="KW-0699">rRNA-binding</keyword>
<proteinExistence type="inferred from homology"/>
<dbReference type="EMBL" id="CP000255">
    <property type="protein sequence ID" value="ABD22714.1"/>
    <property type="molecule type" value="Genomic_DNA"/>
</dbReference>
<dbReference type="RefSeq" id="WP_000178881.1">
    <property type="nucleotide sequence ID" value="NZ_CP027476.1"/>
</dbReference>
<dbReference type="SMR" id="Q2FEQ3"/>
<dbReference type="GeneID" id="98346548"/>
<dbReference type="KEGG" id="saa:SAUSA300_2190"/>
<dbReference type="HOGENOM" id="CLU_098428_0_2_9"/>
<dbReference type="OMA" id="NSAYHDT"/>
<dbReference type="Proteomes" id="UP000001939">
    <property type="component" value="Chromosome"/>
</dbReference>
<dbReference type="GO" id="GO:1990904">
    <property type="term" value="C:ribonucleoprotein complex"/>
    <property type="evidence" value="ECO:0007669"/>
    <property type="project" value="UniProtKB-KW"/>
</dbReference>
<dbReference type="GO" id="GO:0005840">
    <property type="term" value="C:ribosome"/>
    <property type="evidence" value="ECO:0007669"/>
    <property type="project" value="UniProtKB-KW"/>
</dbReference>
<dbReference type="GO" id="GO:0019843">
    <property type="term" value="F:rRNA binding"/>
    <property type="evidence" value="ECO:0007669"/>
    <property type="project" value="UniProtKB-UniRule"/>
</dbReference>
<dbReference type="GO" id="GO:0003735">
    <property type="term" value="F:structural constituent of ribosome"/>
    <property type="evidence" value="ECO:0007669"/>
    <property type="project" value="InterPro"/>
</dbReference>
<dbReference type="GO" id="GO:0006412">
    <property type="term" value="P:translation"/>
    <property type="evidence" value="ECO:0007669"/>
    <property type="project" value="UniProtKB-UniRule"/>
</dbReference>
<dbReference type="FunFam" id="3.30.1370.30:FF:000002">
    <property type="entry name" value="30S ribosomal protein S8"/>
    <property type="match status" value="1"/>
</dbReference>
<dbReference type="FunFam" id="3.30.1490.10:FF:000001">
    <property type="entry name" value="30S ribosomal protein S8"/>
    <property type="match status" value="1"/>
</dbReference>
<dbReference type="Gene3D" id="3.30.1370.30">
    <property type="match status" value="1"/>
</dbReference>
<dbReference type="Gene3D" id="3.30.1490.10">
    <property type="match status" value="1"/>
</dbReference>
<dbReference type="HAMAP" id="MF_01302_B">
    <property type="entry name" value="Ribosomal_uS8_B"/>
    <property type="match status" value="1"/>
</dbReference>
<dbReference type="InterPro" id="IPR000630">
    <property type="entry name" value="Ribosomal_uS8"/>
</dbReference>
<dbReference type="InterPro" id="IPR047863">
    <property type="entry name" value="Ribosomal_uS8_CS"/>
</dbReference>
<dbReference type="InterPro" id="IPR035987">
    <property type="entry name" value="Ribosomal_uS8_sf"/>
</dbReference>
<dbReference type="NCBIfam" id="NF001109">
    <property type="entry name" value="PRK00136.1"/>
    <property type="match status" value="1"/>
</dbReference>
<dbReference type="PANTHER" id="PTHR11758">
    <property type="entry name" value="40S RIBOSOMAL PROTEIN S15A"/>
    <property type="match status" value="1"/>
</dbReference>
<dbReference type="Pfam" id="PF00410">
    <property type="entry name" value="Ribosomal_S8"/>
    <property type="match status" value="1"/>
</dbReference>
<dbReference type="SUPFAM" id="SSF56047">
    <property type="entry name" value="Ribosomal protein S8"/>
    <property type="match status" value="1"/>
</dbReference>
<dbReference type="PROSITE" id="PS00053">
    <property type="entry name" value="RIBOSOMAL_S8"/>
    <property type="match status" value="1"/>
</dbReference>
<sequence length="132" mass="14831">MTMTDPIADMLTRVRNANMVRHEKLELPASNIKKEIAEILKSEGFIKNVEYVEDDKQGVLRLFLKYGQNDERVITGLKRISKPGLRVYAKASEMPKVLNGLGIALVSTSEGVITDKEARKRNVGGEIIAYVW</sequence>
<organism>
    <name type="scientific">Staphylococcus aureus (strain USA300)</name>
    <dbReference type="NCBI Taxonomy" id="367830"/>
    <lineage>
        <taxon>Bacteria</taxon>
        <taxon>Bacillati</taxon>
        <taxon>Bacillota</taxon>
        <taxon>Bacilli</taxon>
        <taxon>Bacillales</taxon>
        <taxon>Staphylococcaceae</taxon>
        <taxon>Staphylococcus</taxon>
    </lineage>
</organism>
<accession>Q2FEQ3</accession>